<feature type="chain" id="PRO_1000128150" description="Small ribosomal subunit protein uS9">
    <location>
        <begin position="1"/>
        <end position="130"/>
    </location>
</feature>
<accession>B1VA58</accession>
<protein>
    <recommendedName>
        <fullName evidence="1">Small ribosomal subunit protein uS9</fullName>
    </recommendedName>
    <alternativeName>
        <fullName evidence="2">30S ribosomal protein S9</fullName>
    </alternativeName>
</protein>
<evidence type="ECO:0000255" key="1">
    <source>
        <dbReference type="HAMAP-Rule" id="MF_00532"/>
    </source>
</evidence>
<evidence type="ECO:0000305" key="2"/>
<keyword id="KW-1185">Reference proteome</keyword>
<keyword id="KW-0687">Ribonucleoprotein</keyword>
<keyword id="KW-0689">Ribosomal protein</keyword>
<sequence>MKQVNFCGTGRRKTAVARVILTNGTGKITINTKNFETYLPQPTTRLDMLQPLIISEKKDVYDVRVNVNGGGLCAQAGAIRLGIARALLESIPELRPVLKKAGLLTRDARCVERKKYGLKKARRAPQFSKR</sequence>
<gene>
    <name evidence="1" type="primary">rpsI</name>
    <name type="ordered locus">PA0497</name>
</gene>
<proteinExistence type="inferred from homology"/>
<name>RS9_PHYAS</name>
<organism>
    <name type="scientific">Phytoplasma australiense</name>
    <dbReference type="NCBI Taxonomy" id="59748"/>
    <lineage>
        <taxon>Bacteria</taxon>
        <taxon>Bacillati</taxon>
        <taxon>Mycoplasmatota</taxon>
        <taxon>Mollicutes</taxon>
        <taxon>Acholeplasmatales</taxon>
        <taxon>Acholeplasmataceae</taxon>
        <taxon>Candidatus Phytoplasma</taxon>
        <taxon>16SrXII (Stolbur group)</taxon>
    </lineage>
</organism>
<reference key="1">
    <citation type="journal article" date="2008" name="J. Bacteriol.">
        <title>Comparative genome analysis of 'Candidatus Phytoplasma australiense' (subgroup tuf-Australia I; rp-A) and 'Ca. Phytoplasma asteris' strains OY-M and AY-WB.</title>
        <authorList>
            <person name="Tran-Nguyen L.T."/>
            <person name="Kube M."/>
            <person name="Schneider B."/>
            <person name="Reinhardt R."/>
            <person name="Gibb K.S."/>
        </authorList>
    </citation>
    <scope>NUCLEOTIDE SEQUENCE [LARGE SCALE GENOMIC DNA]</scope>
</reference>
<dbReference type="EMBL" id="AM422018">
    <property type="protein sequence ID" value="CAM11831.1"/>
    <property type="molecule type" value="Genomic_DNA"/>
</dbReference>
<dbReference type="SMR" id="B1VA58"/>
<dbReference type="STRING" id="59748.PA0497"/>
<dbReference type="KEGG" id="pal:PA0497"/>
<dbReference type="eggNOG" id="COG0103">
    <property type="taxonomic scope" value="Bacteria"/>
</dbReference>
<dbReference type="Proteomes" id="UP000008323">
    <property type="component" value="Chromosome"/>
</dbReference>
<dbReference type="GO" id="GO:0022627">
    <property type="term" value="C:cytosolic small ribosomal subunit"/>
    <property type="evidence" value="ECO:0007669"/>
    <property type="project" value="TreeGrafter"/>
</dbReference>
<dbReference type="GO" id="GO:0003723">
    <property type="term" value="F:RNA binding"/>
    <property type="evidence" value="ECO:0007669"/>
    <property type="project" value="TreeGrafter"/>
</dbReference>
<dbReference type="GO" id="GO:0003735">
    <property type="term" value="F:structural constituent of ribosome"/>
    <property type="evidence" value="ECO:0007669"/>
    <property type="project" value="InterPro"/>
</dbReference>
<dbReference type="GO" id="GO:0006412">
    <property type="term" value="P:translation"/>
    <property type="evidence" value="ECO:0007669"/>
    <property type="project" value="UniProtKB-UniRule"/>
</dbReference>
<dbReference type="FunFam" id="3.30.230.10:FF:000001">
    <property type="entry name" value="30S ribosomal protein S9"/>
    <property type="match status" value="1"/>
</dbReference>
<dbReference type="Gene3D" id="3.30.230.10">
    <property type="match status" value="1"/>
</dbReference>
<dbReference type="HAMAP" id="MF_00532_B">
    <property type="entry name" value="Ribosomal_uS9_B"/>
    <property type="match status" value="1"/>
</dbReference>
<dbReference type="InterPro" id="IPR020568">
    <property type="entry name" value="Ribosomal_Su5_D2-typ_SF"/>
</dbReference>
<dbReference type="InterPro" id="IPR000754">
    <property type="entry name" value="Ribosomal_uS9"/>
</dbReference>
<dbReference type="InterPro" id="IPR023035">
    <property type="entry name" value="Ribosomal_uS9_bac/plastid"/>
</dbReference>
<dbReference type="InterPro" id="IPR020574">
    <property type="entry name" value="Ribosomal_uS9_CS"/>
</dbReference>
<dbReference type="InterPro" id="IPR014721">
    <property type="entry name" value="Ribsml_uS5_D2-typ_fold_subgr"/>
</dbReference>
<dbReference type="NCBIfam" id="NF001099">
    <property type="entry name" value="PRK00132.1"/>
    <property type="match status" value="1"/>
</dbReference>
<dbReference type="PANTHER" id="PTHR21569">
    <property type="entry name" value="RIBOSOMAL PROTEIN S9"/>
    <property type="match status" value="1"/>
</dbReference>
<dbReference type="PANTHER" id="PTHR21569:SF1">
    <property type="entry name" value="SMALL RIBOSOMAL SUBUNIT PROTEIN US9M"/>
    <property type="match status" value="1"/>
</dbReference>
<dbReference type="Pfam" id="PF00380">
    <property type="entry name" value="Ribosomal_S9"/>
    <property type="match status" value="1"/>
</dbReference>
<dbReference type="SUPFAM" id="SSF54211">
    <property type="entry name" value="Ribosomal protein S5 domain 2-like"/>
    <property type="match status" value="1"/>
</dbReference>
<dbReference type="PROSITE" id="PS00360">
    <property type="entry name" value="RIBOSOMAL_S9"/>
    <property type="match status" value="1"/>
</dbReference>
<comment type="similarity">
    <text evidence="1">Belongs to the universal ribosomal protein uS9 family.</text>
</comment>